<accession>P09011</accession>
<accession>G3V6E0</accession>
<name>MIP_RAT</name>
<sequence length="263" mass="28209">MWELRSASFWRAIFAEFFATLFYVFFGLGSSLRWAPGPLHVLQVALAFGLALATLVQTVGHISGAHVNPAVTFAFLVGSQMSLLRAFCYIAAQLLGAVAGAAVLYSVTPPAVRGNLALNTLHAGVSVGQATTVEIFLTLQFVLCIFATYDERRNGRMGSVALAVGFSLTLGHLFGMYYTGAGMNPARSFAPAILTRNFSNHWVYWVGPIIGGGLGSLLYDFLLFPRLKSVSERLSILKGARPSDSNGQPEGTGEPVELKTQAL</sequence>
<reference key="1">
    <citation type="journal article" date="1995" name="Biochem. J.">
        <title>Heterologous expression in Escherichia coli of native and mutant forms of the major intrinsic protein of rat eye lens (MIP26).</title>
        <authorList>
            <person name="Dilsiz N."/>
            <person name="Crabbe M.J.C."/>
        </authorList>
    </citation>
    <scope>NUCLEOTIDE SEQUENCE [MRNA]</scope>
    <scope>MUTAGENESIS OF ASN-246</scope>
</reference>
<reference key="2">
    <citation type="journal article" date="2004" name="Nature">
        <title>Genome sequence of the Brown Norway rat yields insights into mammalian evolution.</title>
        <authorList>
            <person name="Gibbs R.A."/>
            <person name="Weinstock G.M."/>
            <person name="Metzker M.L."/>
            <person name="Muzny D.M."/>
            <person name="Sodergren E.J."/>
            <person name="Scherer S."/>
            <person name="Scott G."/>
            <person name="Steffen D."/>
            <person name="Worley K.C."/>
            <person name="Burch P.E."/>
            <person name="Okwuonu G."/>
            <person name="Hines S."/>
            <person name="Lewis L."/>
            <person name="Deramo C."/>
            <person name="Delgado O."/>
            <person name="Dugan-Rocha S."/>
            <person name="Miner G."/>
            <person name="Morgan M."/>
            <person name="Hawes A."/>
            <person name="Gill R."/>
            <person name="Holt R.A."/>
            <person name="Adams M.D."/>
            <person name="Amanatides P.G."/>
            <person name="Baden-Tillson H."/>
            <person name="Barnstead M."/>
            <person name="Chin S."/>
            <person name="Evans C.A."/>
            <person name="Ferriera S."/>
            <person name="Fosler C."/>
            <person name="Glodek A."/>
            <person name="Gu Z."/>
            <person name="Jennings D."/>
            <person name="Kraft C.L."/>
            <person name="Nguyen T."/>
            <person name="Pfannkoch C.M."/>
            <person name="Sitter C."/>
            <person name="Sutton G.G."/>
            <person name="Venter J.C."/>
            <person name="Woodage T."/>
            <person name="Smith D."/>
            <person name="Lee H.-M."/>
            <person name="Gustafson E."/>
            <person name="Cahill P."/>
            <person name="Kana A."/>
            <person name="Doucette-Stamm L."/>
            <person name="Weinstock K."/>
            <person name="Fechtel K."/>
            <person name="Weiss R.B."/>
            <person name="Dunn D.M."/>
            <person name="Green E.D."/>
            <person name="Blakesley R.W."/>
            <person name="Bouffard G.G."/>
            <person name="De Jong P.J."/>
            <person name="Osoegawa K."/>
            <person name="Zhu B."/>
            <person name="Marra M."/>
            <person name="Schein J."/>
            <person name="Bosdet I."/>
            <person name="Fjell C."/>
            <person name="Jones S."/>
            <person name="Krzywinski M."/>
            <person name="Mathewson C."/>
            <person name="Siddiqui A."/>
            <person name="Wye N."/>
            <person name="McPherson J."/>
            <person name="Zhao S."/>
            <person name="Fraser C.M."/>
            <person name="Shetty J."/>
            <person name="Shatsman S."/>
            <person name="Geer K."/>
            <person name="Chen Y."/>
            <person name="Abramzon S."/>
            <person name="Nierman W.C."/>
            <person name="Havlak P.H."/>
            <person name="Chen R."/>
            <person name="Durbin K.J."/>
            <person name="Egan A."/>
            <person name="Ren Y."/>
            <person name="Song X.-Z."/>
            <person name="Li B."/>
            <person name="Liu Y."/>
            <person name="Qin X."/>
            <person name="Cawley S."/>
            <person name="Cooney A.J."/>
            <person name="D'Souza L.M."/>
            <person name="Martin K."/>
            <person name="Wu J.Q."/>
            <person name="Gonzalez-Garay M.L."/>
            <person name="Jackson A.R."/>
            <person name="Kalafus K.J."/>
            <person name="McLeod M.P."/>
            <person name="Milosavljevic A."/>
            <person name="Virk D."/>
            <person name="Volkov A."/>
            <person name="Wheeler D.A."/>
            <person name="Zhang Z."/>
            <person name="Bailey J.A."/>
            <person name="Eichler E.E."/>
            <person name="Tuzun E."/>
            <person name="Birney E."/>
            <person name="Mongin E."/>
            <person name="Ureta-Vidal A."/>
            <person name="Woodwark C."/>
            <person name="Zdobnov E."/>
            <person name="Bork P."/>
            <person name="Suyama M."/>
            <person name="Torrents D."/>
            <person name="Alexandersson M."/>
            <person name="Trask B.J."/>
            <person name="Young J.M."/>
            <person name="Huang H."/>
            <person name="Wang H."/>
            <person name="Xing H."/>
            <person name="Daniels S."/>
            <person name="Gietzen D."/>
            <person name="Schmidt J."/>
            <person name="Stevens K."/>
            <person name="Vitt U."/>
            <person name="Wingrove J."/>
            <person name="Camara F."/>
            <person name="Mar Alba M."/>
            <person name="Abril J.F."/>
            <person name="Guigo R."/>
            <person name="Smit A."/>
            <person name="Dubchak I."/>
            <person name="Rubin E.M."/>
            <person name="Couronne O."/>
            <person name="Poliakov A."/>
            <person name="Huebner N."/>
            <person name="Ganten D."/>
            <person name="Goesele C."/>
            <person name="Hummel O."/>
            <person name="Kreitler T."/>
            <person name="Lee Y.-A."/>
            <person name="Monti J."/>
            <person name="Schulz H."/>
            <person name="Zimdahl H."/>
            <person name="Himmelbauer H."/>
            <person name="Lehrach H."/>
            <person name="Jacob H.J."/>
            <person name="Bromberg S."/>
            <person name="Gullings-Handley J."/>
            <person name="Jensen-Seaman M.I."/>
            <person name="Kwitek A.E."/>
            <person name="Lazar J."/>
            <person name="Pasko D."/>
            <person name="Tonellato P.J."/>
            <person name="Twigger S."/>
            <person name="Ponting C.P."/>
            <person name="Duarte J.M."/>
            <person name="Rice S."/>
            <person name="Goodstadt L."/>
            <person name="Beatson S.A."/>
            <person name="Emes R.D."/>
            <person name="Winter E.E."/>
            <person name="Webber C."/>
            <person name="Brandt P."/>
            <person name="Nyakatura G."/>
            <person name="Adetobi M."/>
            <person name="Chiaromonte F."/>
            <person name="Elnitski L."/>
            <person name="Eswara P."/>
            <person name="Hardison R.C."/>
            <person name="Hou M."/>
            <person name="Kolbe D."/>
            <person name="Makova K."/>
            <person name="Miller W."/>
            <person name="Nekrutenko A."/>
            <person name="Riemer C."/>
            <person name="Schwartz S."/>
            <person name="Taylor J."/>
            <person name="Yang S."/>
            <person name="Zhang Y."/>
            <person name="Lindpaintner K."/>
            <person name="Andrews T.D."/>
            <person name="Caccamo M."/>
            <person name="Clamp M."/>
            <person name="Clarke L."/>
            <person name="Curwen V."/>
            <person name="Durbin R.M."/>
            <person name="Eyras E."/>
            <person name="Searle S.M."/>
            <person name="Cooper G.M."/>
            <person name="Batzoglou S."/>
            <person name="Brudno M."/>
            <person name="Sidow A."/>
            <person name="Stone E.A."/>
            <person name="Payseur B.A."/>
            <person name="Bourque G."/>
            <person name="Lopez-Otin C."/>
            <person name="Puente X.S."/>
            <person name="Chakrabarti K."/>
            <person name="Chatterji S."/>
            <person name="Dewey C."/>
            <person name="Pachter L."/>
            <person name="Bray N."/>
            <person name="Yap V.B."/>
            <person name="Caspi A."/>
            <person name="Tesler G."/>
            <person name="Pevzner P.A."/>
            <person name="Haussler D."/>
            <person name="Roskin K.M."/>
            <person name="Baertsch R."/>
            <person name="Clawson H."/>
            <person name="Furey T.S."/>
            <person name="Hinrichs A.S."/>
            <person name="Karolchik D."/>
            <person name="Kent W.J."/>
            <person name="Rosenbloom K.R."/>
            <person name="Trumbower H."/>
            <person name="Weirauch M."/>
            <person name="Cooper D.N."/>
            <person name="Stenson P.D."/>
            <person name="Ma B."/>
            <person name="Brent M."/>
            <person name="Arumugam M."/>
            <person name="Shteynberg D."/>
            <person name="Copley R.R."/>
            <person name="Taylor M.S."/>
            <person name="Riethman H."/>
            <person name="Mudunuri U."/>
            <person name="Peterson J."/>
            <person name="Guyer M."/>
            <person name="Felsenfeld A."/>
            <person name="Old S."/>
            <person name="Mockrin S."/>
            <person name="Collins F.S."/>
        </authorList>
    </citation>
    <scope>NUCLEOTIDE SEQUENCE [LARGE SCALE GENOMIC DNA]</scope>
    <source>
        <strain>Brown Norway</strain>
    </source>
</reference>
<reference key="3">
    <citation type="journal article" date="1990" name="Nucleic Acids Res.">
        <title>Nucleotide and derived amino-acid sequence of the major intrinsic protein of rat eye-lens.</title>
        <authorList>
            <person name="Kent N.A."/>
            <person name="Shiels A."/>
        </authorList>
    </citation>
    <scope>NUCLEOTIDE SEQUENCE [MRNA] OF 3-263</scope>
    <source>
        <strain>Sprague-Dawley</strain>
        <tissue>Eye</tissue>
    </source>
</reference>
<reference key="4">
    <citation type="journal article" date="1988" name="Nucleic Acids Res.">
        <title>Homology of MIP26 to Nod26.</title>
        <authorList>
            <person name="Shiels A."/>
            <person name="Kent N.A."/>
            <person name="McHale M."/>
            <person name="Bangham J.A."/>
        </authorList>
    </citation>
    <scope>NUCLEOTIDE SEQUENCE [MRNA] OF 134-263</scope>
    <source>
        <strain>Sprague-Dawley</strain>
    </source>
</reference>
<reference key="5">
    <citation type="journal article" date="1999" name="Invest. Ophthalmol. Vis. Sci.">
        <title>Modifications to rat lens major intrinsic protein in selenite-induced cataract.</title>
        <authorList>
            <person name="Schey K.L."/>
            <person name="Fowler J.G."/>
            <person name="Shearer T.R."/>
            <person name="David L."/>
        </authorList>
    </citation>
    <scope>PHOSPHORYLATION AT SER-235</scope>
</reference>
<organism>
    <name type="scientific">Rattus norvegicus</name>
    <name type="common">Rat</name>
    <dbReference type="NCBI Taxonomy" id="10116"/>
    <lineage>
        <taxon>Eukaryota</taxon>
        <taxon>Metazoa</taxon>
        <taxon>Chordata</taxon>
        <taxon>Craniata</taxon>
        <taxon>Vertebrata</taxon>
        <taxon>Euteleostomi</taxon>
        <taxon>Mammalia</taxon>
        <taxon>Eutheria</taxon>
        <taxon>Euarchontoglires</taxon>
        <taxon>Glires</taxon>
        <taxon>Rodentia</taxon>
        <taxon>Myomorpha</taxon>
        <taxon>Muroidea</taxon>
        <taxon>Muridae</taxon>
        <taxon>Murinae</taxon>
        <taxon>Rattus</taxon>
    </lineage>
</organism>
<keyword id="KW-0965">Cell junction</keyword>
<keyword id="KW-1003">Cell membrane</keyword>
<keyword id="KW-0273">Eye lens protein</keyword>
<keyword id="KW-0449">Lipoprotein</keyword>
<keyword id="KW-0472">Membrane</keyword>
<keyword id="KW-0597">Phosphoprotein</keyword>
<keyword id="KW-1185">Reference proteome</keyword>
<keyword id="KW-0677">Repeat</keyword>
<keyword id="KW-0812">Transmembrane</keyword>
<keyword id="KW-1133">Transmembrane helix</keyword>
<keyword id="KW-0813">Transport</keyword>
<evidence type="ECO:0000250" key="1">
    <source>
        <dbReference type="UniProtKB" id="P06624"/>
    </source>
</evidence>
<evidence type="ECO:0000250" key="2">
    <source>
        <dbReference type="UniProtKB" id="P30301"/>
    </source>
</evidence>
<evidence type="ECO:0000250" key="3">
    <source>
        <dbReference type="UniProtKB" id="Q6J8I9"/>
    </source>
</evidence>
<evidence type="ECO:0000256" key="4">
    <source>
        <dbReference type="SAM" id="MobiDB-lite"/>
    </source>
</evidence>
<evidence type="ECO:0000269" key="5">
    <source>
    </source>
</evidence>
<evidence type="ECO:0000269" key="6">
    <source>
    </source>
</evidence>
<evidence type="ECO:0000303" key="7">
    <source>
    </source>
</evidence>
<evidence type="ECO:0000305" key="8"/>
<evidence type="ECO:0000312" key="9">
    <source>
        <dbReference type="RGD" id="3090"/>
    </source>
</evidence>
<dbReference type="EMBL" id="AC109891">
    <property type="status" value="NOT_ANNOTATED_CDS"/>
    <property type="molecule type" value="Genomic_DNA"/>
</dbReference>
<dbReference type="EMBL" id="X12514">
    <property type="protein sequence ID" value="CAA31035.1"/>
    <property type="molecule type" value="mRNA"/>
</dbReference>
<dbReference type="EMBL" id="X53052">
    <property type="protein sequence ID" value="CAA37219.1"/>
    <property type="molecule type" value="mRNA"/>
</dbReference>
<dbReference type="PIR" id="S01439">
    <property type="entry name" value="S01439"/>
</dbReference>
<dbReference type="PIR" id="S53423">
    <property type="entry name" value="S53423"/>
</dbReference>
<dbReference type="RefSeq" id="NP_001099189.1">
    <property type="nucleotide sequence ID" value="NM_001105719.2"/>
</dbReference>
<dbReference type="SMR" id="P09011"/>
<dbReference type="FunCoup" id="P09011">
    <property type="interactions" value="58"/>
</dbReference>
<dbReference type="STRING" id="10116.ENSRNOP00000004223"/>
<dbReference type="iPTMnet" id="P09011"/>
<dbReference type="PhosphoSitePlus" id="P09011"/>
<dbReference type="PaxDb" id="10116-ENSRNOP00000004223"/>
<dbReference type="Ensembl" id="ENSRNOT00000004223.8">
    <property type="protein sequence ID" value="ENSRNOP00000004223.4"/>
    <property type="gene ID" value="ENSRNOG00000003132.8"/>
</dbReference>
<dbReference type="Ensembl" id="ENSRNOT00055023325">
    <property type="protein sequence ID" value="ENSRNOP00055018938"/>
    <property type="gene ID" value="ENSRNOG00055013605"/>
</dbReference>
<dbReference type="Ensembl" id="ENSRNOT00060038139">
    <property type="protein sequence ID" value="ENSRNOP00060031434"/>
    <property type="gene ID" value="ENSRNOG00060022011"/>
</dbReference>
<dbReference type="Ensembl" id="ENSRNOT00065021988">
    <property type="protein sequence ID" value="ENSRNOP00065017042"/>
    <property type="gene ID" value="ENSRNOG00065013368"/>
</dbReference>
<dbReference type="GeneID" id="25480"/>
<dbReference type="KEGG" id="rno:25480"/>
<dbReference type="UCSC" id="RGD:3090">
    <property type="organism name" value="rat"/>
</dbReference>
<dbReference type="AGR" id="RGD:3090"/>
<dbReference type="CTD" id="4284"/>
<dbReference type="RGD" id="3090">
    <property type="gene designation" value="Mip"/>
</dbReference>
<dbReference type="eggNOG" id="KOG0223">
    <property type="taxonomic scope" value="Eukaryota"/>
</dbReference>
<dbReference type="GeneTree" id="ENSGT00940000156260"/>
<dbReference type="HOGENOM" id="CLU_020019_3_3_1"/>
<dbReference type="InParanoid" id="P09011"/>
<dbReference type="OMA" id="LALNTMH"/>
<dbReference type="OrthoDB" id="3222at2759"/>
<dbReference type="PhylomeDB" id="P09011"/>
<dbReference type="TreeFam" id="TF312940"/>
<dbReference type="Reactome" id="R-RNO-432047">
    <property type="pathway name" value="Passive transport by Aquaporins"/>
</dbReference>
<dbReference type="Proteomes" id="UP000002494">
    <property type="component" value="Chromosome 7"/>
</dbReference>
<dbReference type="Bgee" id="ENSRNOG00000003132">
    <property type="expression patterns" value="Expressed in spleen and 3 other cell types or tissues"/>
</dbReference>
<dbReference type="GO" id="GO:0070161">
    <property type="term" value="C:anchoring junction"/>
    <property type="evidence" value="ECO:0007669"/>
    <property type="project" value="UniProtKB-SubCell"/>
</dbReference>
<dbReference type="GO" id="GO:0016324">
    <property type="term" value="C:apical plasma membrane"/>
    <property type="evidence" value="ECO:0000318"/>
    <property type="project" value="GO_Central"/>
</dbReference>
<dbReference type="GO" id="GO:0046691">
    <property type="term" value="C:intracellular canaliculus"/>
    <property type="evidence" value="ECO:0000314"/>
    <property type="project" value="RGD"/>
</dbReference>
<dbReference type="GO" id="GO:0016020">
    <property type="term" value="C:membrane"/>
    <property type="evidence" value="ECO:0000266"/>
    <property type="project" value="RGD"/>
</dbReference>
<dbReference type="GO" id="GO:0005886">
    <property type="term" value="C:plasma membrane"/>
    <property type="evidence" value="ECO:0000250"/>
    <property type="project" value="UniProtKB"/>
</dbReference>
<dbReference type="GO" id="GO:0005516">
    <property type="term" value="F:calmodulin binding"/>
    <property type="evidence" value="ECO:0000250"/>
    <property type="project" value="UniProtKB"/>
</dbReference>
<dbReference type="GO" id="GO:0098631">
    <property type="term" value="F:cell adhesion mediator activity"/>
    <property type="evidence" value="ECO:0000250"/>
    <property type="project" value="UniProtKB"/>
</dbReference>
<dbReference type="GO" id="GO:0005212">
    <property type="term" value="F:structural constituent of eye lens"/>
    <property type="evidence" value="ECO:0000266"/>
    <property type="project" value="RGD"/>
</dbReference>
<dbReference type="GO" id="GO:0015250">
    <property type="term" value="F:water channel activity"/>
    <property type="evidence" value="ECO:0000314"/>
    <property type="project" value="RGD"/>
</dbReference>
<dbReference type="GO" id="GO:0015722">
    <property type="term" value="P:canalicular bile acid transport"/>
    <property type="evidence" value="ECO:0000314"/>
    <property type="project" value="RGD"/>
</dbReference>
<dbReference type="GO" id="GO:1990349">
    <property type="term" value="P:gap junction-mediated intercellular transport"/>
    <property type="evidence" value="ECO:0000266"/>
    <property type="project" value="RGD"/>
</dbReference>
<dbReference type="GO" id="GO:0034109">
    <property type="term" value="P:homotypic cell-cell adhesion"/>
    <property type="evidence" value="ECO:0000250"/>
    <property type="project" value="UniProtKB"/>
</dbReference>
<dbReference type="GO" id="GO:0002088">
    <property type="term" value="P:lens development in camera-type eye"/>
    <property type="evidence" value="ECO:0000266"/>
    <property type="project" value="RGD"/>
</dbReference>
<dbReference type="GO" id="GO:0036438">
    <property type="term" value="P:maintenance of lens transparency"/>
    <property type="evidence" value="ECO:0000250"/>
    <property type="project" value="UniProtKB"/>
</dbReference>
<dbReference type="GO" id="GO:0007601">
    <property type="term" value="P:visual perception"/>
    <property type="evidence" value="ECO:0000266"/>
    <property type="project" value="RGD"/>
</dbReference>
<dbReference type="GO" id="GO:0006833">
    <property type="term" value="P:water transport"/>
    <property type="evidence" value="ECO:0000314"/>
    <property type="project" value="RGD"/>
</dbReference>
<dbReference type="CDD" id="cd00333">
    <property type="entry name" value="MIP"/>
    <property type="match status" value="1"/>
</dbReference>
<dbReference type="FunFam" id="1.20.1080.10:FF:000003">
    <property type="entry name" value="Lens fiber major intrinsic"/>
    <property type="match status" value="1"/>
</dbReference>
<dbReference type="Gene3D" id="1.20.1080.10">
    <property type="entry name" value="Glycerol uptake facilitator protein"/>
    <property type="match status" value="1"/>
</dbReference>
<dbReference type="InterPro" id="IPR023271">
    <property type="entry name" value="Aquaporin-like"/>
</dbReference>
<dbReference type="InterPro" id="IPR034294">
    <property type="entry name" value="Aquaporin_transptr"/>
</dbReference>
<dbReference type="InterPro" id="IPR000425">
    <property type="entry name" value="MIP"/>
</dbReference>
<dbReference type="InterPro" id="IPR022357">
    <property type="entry name" value="MIP_CS"/>
</dbReference>
<dbReference type="NCBIfam" id="TIGR00861">
    <property type="entry name" value="MIP"/>
    <property type="match status" value="1"/>
</dbReference>
<dbReference type="PANTHER" id="PTHR19139">
    <property type="entry name" value="AQUAPORIN TRANSPORTER"/>
    <property type="match status" value="1"/>
</dbReference>
<dbReference type="PANTHER" id="PTHR19139:SF39">
    <property type="entry name" value="LENS FIBER MAJOR INTRINSIC PROTEIN"/>
    <property type="match status" value="1"/>
</dbReference>
<dbReference type="Pfam" id="PF00230">
    <property type="entry name" value="MIP"/>
    <property type="match status" value="1"/>
</dbReference>
<dbReference type="PRINTS" id="PR02014">
    <property type="entry name" value="AQUAPORIN2"/>
</dbReference>
<dbReference type="PRINTS" id="PR00783">
    <property type="entry name" value="MINTRINSICP"/>
</dbReference>
<dbReference type="SUPFAM" id="SSF81338">
    <property type="entry name" value="Aquaporin-like"/>
    <property type="match status" value="1"/>
</dbReference>
<dbReference type="PROSITE" id="PS00221">
    <property type="entry name" value="MIP"/>
    <property type="match status" value="1"/>
</dbReference>
<feature type="chain" id="PRO_0000063914" description="Lens fiber major intrinsic protein">
    <location>
        <begin position="1"/>
        <end position="263"/>
    </location>
</feature>
<feature type="topological domain" description="Cytoplasmic" evidence="1">
    <location>
        <begin position="1"/>
        <end position="9"/>
    </location>
</feature>
<feature type="transmembrane region" description="Helical; Name=1" evidence="1">
    <location>
        <begin position="10"/>
        <end position="29"/>
    </location>
</feature>
<feature type="topological domain" description="Extracellular" evidence="1">
    <location>
        <begin position="30"/>
        <end position="41"/>
    </location>
</feature>
<feature type="transmembrane region" description="Helical; Name=2" evidence="1">
    <location>
        <begin position="42"/>
        <end position="59"/>
    </location>
</feature>
<feature type="topological domain" description="Cytoplasmic" evidence="1">
    <location>
        <begin position="60"/>
        <end position="61"/>
    </location>
</feature>
<feature type="intramembrane region" description="Discontinuously helical" evidence="1">
    <location>
        <begin position="62"/>
        <end position="77"/>
    </location>
</feature>
<feature type="topological domain" description="Cytoplasmic" evidence="1">
    <location>
        <begin position="78"/>
        <end position="82"/>
    </location>
</feature>
<feature type="transmembrane region" description="Helical; Name=3" evidence="1">
    <location>
        <begin position="83"/>
        <end position="106"/>
    </location>
</feature>
<feature type="topological domain" description="Extracellular" evidence="1">
    <location>
        <begin position="107"/>
        <end position="127"/>
    </location>
</feature>
<feature type="transmembrane region" description="Helical; Name=4" evidence="1">
    <location>
        <begin position="128"/>
        <end position="148"/>
    </location>
</feature>
<feature type="topological domain" description="Cytoplasmic" evidence="1">
    <location>
        <begin position="149"/>
        <end position="156"/>
    </location>
</feature>
<feature type="transmembrane region" description="Helical; Name=5" evidence="1">
    <location>
        <begin position="157"/>
        <end position="175"/>
    </location>
</feature>
<feature type="topological domain" description="Extracellular" evidence="1">
    <location>
        <begin position="176"/>
        <end position="178"/>
    </location>
</feature>
<feature type="intramembrane region" description="Discontinuously helical" evidence="1">
    <location>
        <begin position="179"/>
        <end position="193"/>
    </location>
</feature>
<feature type="topological domain" description="Extracellular" evidence="1">
    <location>
        <begin position="194"/>
        <end position="200"/>
    </location>
</feature>
<feature type="transmembrane region" description="Helical; Name=6" evidence="1">
    <location>
        <begin position="201"/>
        <end position="222"/>
    </location>
</feature>
<feature type="topological domain" description="Cytoplasmic" evidence="1">
    <location>
        <begin position="223"/>
        <end position="263"/>
    </location>
</feature>
<feature type="region of interest" description="Interaction with CALM" evidence="1">
    <location>
        <begin position="227"/>
        <end position="237"/>
    </location>
</feature>
<feature type="region of interest" description="Disordered" evidence="4">
    <location>
        <begin position="240"/>
        <end position="263"/>
    </location>
</feature>
<feature type="short sequence motif" description="NPA 1" evidence="1">
    <location>
        <begin position="68"/>
        <end position="70"/>
    </location>
</feature>
<feature type="short sequence motif" description="NPA 2" evidence="1">
    <location>
        <begin position="184"/>
        <end position="186"/>
    </location>
</feature>
<feature type="site" description="Important for water channel gating" evidence="1">
    <location>
        <position position="149"/>
    </location>
</feature>
<feature type="site" description="Interaction with BFSP1" evidence="1">
    <location>
        <position position="246"/>
    </location>
</feature>
<feature type="site" description="interaction with BFSP1" evidence="1">
    <location>
        <position position="250"/>
    </location>
</feature>
<feature type="modified residue" description="Phosphoserine" evidence="5">
    <location>
        <position position="235"/>
    </location>
</feature>
<feature type="modified residue" description="Phosphoserine" evidence="1">
    <location>
        <position position="243"/>
    </location>
</feature>
<feature type="modified residue" description="Phosphoserine" evidence="1">
    <location>
        <position position="245"/>
    </location>
</feature>
<feature type="modified residue" description="Deamidated asparagine" evidence="2">
    <location>
        <position position="246"/>
    </location>
</feature>
<feature type="mutagenesis site" description="No effects." evidence="6">
    <original>N</original>
    <variation>D</variation>
    <location>
        <position position="246"/>
    </location>
</feature>
<feature type="sequence conflict" description="In Ref. 1; CAA31035." evidence="8" ref="1">
    <original>EI</original>
    <variation>RF</variation>
    <location>
        <begin position="134"/>
        <end position="135"/>
    </location>
</feature>
<protein>
    <recommendedName>
        <fullName evidence="2">Lens fiber major intrinsic protein</fullName>
    </recommendedName>
    <alternativeName>
        <fullName evidence="2">Aquaporin-0</fullName>
    </alternativeName>
    <alternativeName>
        <fullName evidence="7">MIP26</fullName>
        <shortName evidence="2">MP26</shortName>
    </alternativeName>
</protein>
<gene>
    <name evidence="9" type="primary">Mip</name>
</gene>
<comment type="function">
    <text evidence="2">Aquaporins form homotetrameric transmembrane channels, with each monomer independently mediating water transport across the plasma membrane along its osmotic gradient. Specifically expressed in lens fiber cells, this aquaporin is crucial for maintaining lens water homeostasis and transparency. Beyond water permeability, it also acts as a cell-to-cell adhesion molecule, forming thin junctions between lens fiber cells that are essential for maintaining the ordered structure and transparency of the lens.</text>
</comment>
<comment type="catalytic activity">
    <reaction evidence="2">
        <text>H2O(in) = H2O(out)</text>
        <dbReference type="Rhea" id="RHEA:29667"/>
        <dbReference type="ChEBI" id="CHEBI:15377"/>
    </reaction>
</comment>
<comment type="activity regulation">
    <text evidence="2">The water channel activity is inhibited by calcium through calmodulin/CALM.</text>
</comment>
<comment type="subunit">
    <text evidence="1 2">Homotetramer; each monomer provides an independent water pore. Two homotetramers on opposing membranes can dimerize, forming a cell-cell junction. Interacts with CALM; the calcium-calmodulin/CALM complex interacts with the cytoplasmic domains of two aquaporins, leading to channel closure (By similarity). Interacts with BFSP1 (via C-terminus); prevents calcium-dependent inhibition of the water channel activity (By similarity).</text>
</comment>
<comment type="subcellular location">
    <subcellularLocation>
        <location evidence="2">Cell membrane</location>
        <topology evidence="3">Multi-pass membrane protein</topology>
    </subcellularLocation>
    <subcellularLocation>
        <location evidence="3">Cell junction</location>
    </subcellularLocation>
    <text evidence="3">Localizes to thin cell-cell junctions in lens fiber cells.</text>
</comment>
<comment type="domain">
    <text evidence="3">Aquaporins contain two tandem repeats each containing three membrane-spanning domains and a pore-forming loop with the signature motif Asn-Pro-Ala (NPA).</text>
</comment>
<comment type="PTM">
    <text evidence="3">Subject to partial proteolytic cleavage in the eye lens core. Partial proteolysis promotes interactions between tetramers from adjoining membranes.</text>
</comment>
<comment type="PTM">
    <text evidence="2">Fatty acylated at Met-1 and Lys-238. The acyl modifications, in decreasing order of ion abundance, are: oleoyl (C18:1) &gt; palmitoyl (C16:0) &gt; stearoyl (C18:0) &gt; eicosenoyl (C20:1) &gt; dihomo-gamma-linolenoyl (C20:3) &gt; palmitoleoyl (C16:1) &gt; eicosadienoyl (C20:2).</text>
</comment>
<comment type="similarity">
    <text evidence="8">Belongs to the MIP/aquaporin (TC 1.A.8) family.</text>
</comment>
<proteinExistence type="evidence at protein level"/>